<accession>Q13202</accession>
<accession>Q86SS8</accession>
<sequence>MAGDRLPRKVMDAKKLASLLRGGPGGPLVIDSRSFVEYNSWHVLSSVNICCSKLVKRRLQQGKVTIAELIQPAARSQVEATEPQDVVVYDQSTRDASVLAADSFLSILLSKLDGCFDSVAILTGGFATFSSCFPGLCEGKPAALLPMSLSQPCLPVPSVGLTRILPHLYLGSQKDVLNKDLMTQNGISYVLNASNSCPKPDFICESRFMRVPINDNYCEKLLPWLDKSIEFIDKAKLSSCQVIVHCLAGISRSATIAIAYIMKTMGMSSDDAYRFVKDRRPSISPNFNFLGQLLEYERSLKLLAALQGDPGTPSGTPEPPPSPAAGAPLPRLPPPTSESAATGNAAAREGGLSAGGEPPAPPTPPATSALQQGLRGLHLSSDRLQDTNRLKRSFSLDIKSAYAPSRRPDGPGPPDPGEAPKLCKLDSPSGAALGLSSPSPDSPDAAPEARPRPRRRPRPPAGSPARSPAHSLGLNFGDAARQTPRHGLSALSAPGLPGPGQPAGPGAWAPPLDSPGTPSPDGPWCFSPEGAQGAGGVLFAPFGRAGAPGPGGGSDLRRREAARAEPRDARTGWPEEPAPETQFKRRSCQMEFEEGMVEGRARGEELAALGKQASFSGSVEVIEVS</sequence>
<protein>
    <recommendedName>
        <fullName>Dual specificity protein phosphatase 8</fullName>
        <ecNumber>3.1.3.16</ecNumber>
        <ecNumber>3.1.3.48</ecNumber>
    </recommendedName>
    <alternativeName>
        <fullName>Dual specificity protein phosphatase hVH-5</fullName>
    </alternativeName>
</protein>
<organism>
    <name type="scientific">Homo sapiens</name>
    <name type="common">Human</name>
    <dbReference type="NCBI Taxonomy" id="9606"/>
    <lineage>
        <taxon>Eukaryota</taxon>
        <taxon>Metazoa</taxon>
        <taxon>Chordata</taxon>
        <taxon>Craniata</taxon>
        <taxon>Vertebrata</taxon>
        <taxon>Euteleostomi</taxon>
        <taxon>Mammalia</taxon>
        <taxon>Eutheria</taxon>
        <taxon>Euarchontoglires</taxon>
        <taxon>Primates</taxon>
        <taxon>Haplorrhini</taxon>
        <taxon>Catarrhini</taxon>
        <taxon>Hominidae</taxon>
        <taxon>Homo</taxon>
    </lineage>
</organism>
<evidence type="ECO:0000250" key="1">
    <source>
        <dbReference type="UniProtKB" id="O09112"/>
    </source>
</evidence>
<evidence type="ECO:0000255" key="2">
    <source>
        <dbReference type="PROSITE-ProRule" id="PRU00160"/>
    </source>
</evidence>
<evidence type="ECO:0000255" key="3">
    <source>
        <dbReference type="PROSITE-ProRule" id="PRU00173"/>
    </source>
</evidence>
<evidence type="ECO:0000255" key="4">
    <source>
        <dbReference type="PROSITE-ProRule" id="PRU10044"/>
    </source>
</evidence>
<evidence type="ECO:0000256" key="5">
    <source>
        <dbReference type="SAM" id="MobiDB-lite"/>
    </source>
</evidence>
<evidence type="ECO:0000269" key="6">
    <source>
    </source>
</evidence>
<evidence type="ECO:0000269" key="7">
    <source>
    </source>
</evidence>
<evidence type="ECO:0000305" key="8"/>
<evidence type="ECO:0007744" key="9">
    <source>
        <dbReference type="PDB" id="4JMK"/>
    </source>
</evidence>
<evidence type="ECO:0007829" key="10">
    <source>
        <dbReference type="PDB" id="4JMK"/>
    </source>
</evidence>
<dbReference type="EC" id="3.1.3.16"/>
<dbReference type="EC" id="3.1.3.48"/>
<dbReference type="EMBL" id="U27193">
    <property type="protein sequence ID" value="AAA83151.1"/>
    <property type="molecule type" value="mRNA"/>
</dbReference>
<dbReference type="EMBL" id="AP006285">
    <property type="status" value="NOT_ANNOTATED_CDS"/>
    <property type="molecule type" value="Genomic_DNA"/>
</dbReference>
<dbReference type="EMBL" id="BC038231">
    <property type="protein sequence ID" value="AAH38231.1"/>
    <property type="molecule type" value="mRNA"/>
</dbReference>
<dbReference type="EMBL" id="BC045110">
    <property type="protein sequence ID" value="AAH45110.1"/>
    <property type="molecule type" value="mRNA"/>
</dbReference>
<dbReference type="CCDS" id="CCDS7724.1"/>
<dbReference type="RefSeq" id="NP_004411.2">
    <property type="nucleotide sequence ID" value="NM_004420.3"/>
</dbReference>
<dbReference type="RefSeq" id="XP_011518234.1">
    <property type="nucleotide sequence ID" value="XM_011519932.3"/>
</dbReference>
<dbReference type="RefSeq" id="XP_011518235.1">
    <property type="nucleotide sequence ID" value="XM_011519933.3"/>
</dbReference>
<dbReference type="RefSeq" id="XP_054184836.1">
    <property type="nucleotide sequence ID" value="XM_054328861.1"/>
</dbReference>
<dbReference type="RefSeq" id="XP_054184837.1">
    <property type="nucleotide sequence ID" value="XM_054328862.1"/>
</dbReference>
<dbReference type="RefSeq" id="XP_054185959.1">
    <property type="nucleotide sequence ID" value="XM_054329984.1"/>
</dbReference>
<dbReference type="RefSeq" id="XP_054185960.1">
    <property type="nucleotide sequence ID" value="XM_054329985.1"/>
</dbReference>
<dbReference type="RefSeq" id="XP_054189085.1">
    <property type="nucleotide sequence ID" value="XM_054333110.1"/>
</dbReference>
<dbReference type="RefSeq" id="XP_054189086.1">
    <property type="nucleotide sequence ID" value="XM_054333111.1"/>
</dbReference>
<dbReference type="RefSeq" id="XP_054223912.1">
    <property type="nucleotide sequence ID" value="XM_054367937.1"/>
</dbReference>
<dbReference type="RefSeq" id="XP_054223913.1">
    <property type="nucleotide sequence ID" value="XM_054367938.1"/>
</dbReference>
<dbReference type="PDB" id="4JMK">
    <property type="method" value="X-ray"/>
    <property type="resolution" value="1.90 A"/>
    <property type="chains" value="A/B=160-310"/>
</dbReference>
<dbReference type="PDBsum" id="4JMK"/>
<dbReference type="SMR" id="Q13202"/>
<dbReference type="BioGRID" id="108183">
    <property type="interactions" value="42"/>
</dbReference>
<dbReference type="FunCoup" id="Q13202">
    <property type="interactions" value="786"/>
</dbReference>
<dbReference type="IntAct" id="Q13202">
    <property type="interactions" value="3"/>
</dbReference>
<dbReference type="MINT" id="Q13202"/>
<dbReference type="STRING" id="9606.ENSP00000380530"/>
<dbReference type="DEPOD" id="DUSP8"/>
<dbReference type="GlyGen" id="Q13202">
    <property type="glycosylation" value="2 sites"/>
</dbReference>
<dbReference type="iPTMnet" id="Q13202"/>
<dbReference type="PhosphoSitePlus" id="Q13202"/>
<dbReference type="BioMuta" id="DUSP8"/>
<dbReference type="DMDM" id="223590200"/>
<dbReference type="jPOST" id="Q13202"/>
<dbReference type="MassIVE" id="Q13202"/>
<dbReference type="PaxDb" id="9606-ENSP00000380530"/>
<dbReference type="PeptideAtlas" id="Q13202"/>
<dbReference type="ProteomicsDB" id="59222"/>
<dbReference type="Pumba" id="Q13202"/>
<dbReference type="Antibodypedia" id="10181">
    <property type="antibodies" value="213 antibodies from 30 providers"/>
</dbReference>
<dbReference type="DNASU" id="1850"/>
<dbReference type="Ensembl" id="ENST00000331588.4">
    <property type="protein sequence ID" value="ENSP00000329539.4"/>
    <property type="gene ID" value="ENSG00000184545.11"/>
</dbReference>
<dbReference type="Ensembl" id="ENST00000397374.8">
    <property type="protein sequence ID" value="ENSP00000380530.3"/>
    <property type="gene ID" value="ENSG00000184545.11"/>
</dbReference>
<dbReference type="Ensembl" id="ENST00000610856.1">
    <property type="protein sequence ID" value="ENSP00000479946.1"/>
    <property type="gene ID" value="ENSG00000278165.3"/>
</dbReference>
<dbReference type="Ensembl" id="ENST00000617829.1">
    <property type="protein sequence ID" value="ENSP00000481775.1"/>
    <property type="gene ID" value="ENSG00000273793.3"/>
</dbReference>
<dbReference type="Ensembl" id="ENST00000625578.2">
    <property type="protein sequence ID" value="ENSP00000487017.1"/>
    <property type="gene ID" value="ENSG00000273793.3"/>
</dbReference>
<dbReference type="Ensembl" id="ENST00000629053.2">
    <property type="protein sequence ID" value="ENSP00000487093.1"/>
    <property type="gene ID" value="ENSG00000278165.3"/>
</dbReference>
<dbReference type="Ensembl" id="ENST00000707550.1">
    <property type="protein sequence ID" value="ENSP00000516909.1"/>
    <property type="gene ID" value="ENSG00000291431.1"/>
</dbReference>
<dbReference type="Ensembl" id="ENST00000707551.1">
    <property type="protein sequence ID" value="ENSP00000516910.1"/>
    <property type="gene ID" value="ENSG00000291431.1"/>
</dbReference>
<dbReference type="GeneID" id="1850"/>
<dbReference type="KEGG" id="hsa:1850"/>
<dbReference type="MANE-Select" id="ENST00000397374.8">
    <property type="protein sequence ID" value="ENSP00000380530.3"/>
    <property type="RefSeq nucleotide sequence ID" value="NM_004420.3"/>
    <property type="RefSeq protein sequence ID" value="NP_004411.2"/>
</dbReference>
<dbReference type="UCSC" id="uc001lts.3">
    <property type="organism name" value="human"/>
</dbReference>
<dbReference type="AGR" id="HGNC:3074"/>
<dbReference type="CTD" id="1850"/>
<dbReference type="DisGeNET" id="1850"/>
<dbReference type="GeneCards" id="DUSP8"/>
<dbReference type="HGNC" id="HGNC:3074">
    <property type="gene designation" value="DUSP8"/>
</dbReference>
<dbReference type="HPA" id="ENSG00000184545">
    <property type="expression patterns" value="Tissue enhanced (brain)"/>
</dbReference>
<dbReference type="MIM" id="602038">
    <property type="type" value="gene"/>
</dbReference>
<dbReference type="neXtProt" id="NX_Q13202"/>
<dbReference type="OpenTargets" id="ENSG00000184545"/>
<dbReference type="PharmGKB" id="PA27531"/>
<dbReference type="VEuPathDB" id="HostDB:ENSG00000184545"/>
<dbReference type="eggNOG" id="KOG1716">
    <property type="taxonomic scope" value="Eukaryota"/>
</dbReference>
<dbReference type="GeneTree" id="ENSGT00940000160004"/>
<dbReference type="HOGENOM" id="CLU_027074_16_0_1"/>
<dbReference type="InParanoid" id="Q13202"/>
<dbReference type="OMA" id="TDKQFKR"/>
<dbReference type="OrthoDB" id="165342at2759"/>
<dbReference type="PAN-GO" id="Q13202">
    <property type="GO annotations" value="5 GO annotations based on evolutionary models"/>
</dbReference>
<dbReference type="PhylomeDB" id="Q13202"/>
<dbReference type="TreeFam" id="TF105122"/>
<dbReference type="PathwayCommons" id="Q13202"/>
<dbReference type="Reactome" id="R-HSA-112409">
    <property type="pathway name" value="RAF-independent MAPK1/3 activation"/>
</dbReference>
<dbReference type="Reactome" id="R-HSA-5675221">
    <property type="pathway name" value="Negative regulation of MAPK pathway"/>
</dbReference>
<dbReference type="Reactome" id="R-HSA-9652817">
    <property type="pathway name" value="Signaling by MAPK mutants"/>
</dbReference>
<dbReference type="SignaLink" id="Q13202"/>
<dbReference type="SIGNOR" id="Q13202"/>
<dbReference type="BioGRID-ORCS" id="1850">
    <property type="hits" value="15 hits in 1172 CRISPR screens"/>
</dbReference>
<dbReference type="ChiTaRS" id="DUSP8">
    <property type="organism name" value="human"/>
</dbReference>
<dbReference type="EvolutionaryTrace" id="Q13202"/>
<dbReference type="GenomeRNAi" id="1850"/>
<dbReference type="Pharos" id="Q13202">
    <property type="development level" value="Tbio"/>
</dbReference>
<dbReference type="PRO" id="PR:Q13202"/>
<dbReference type="Proteomes" id="UP000005640">
    <property type="component" value="Chromosome 11"/>
</dbReference>
<dbReference type="RNAct" id="Q13202">
    <property type="molecule type" value="protein"/>
</dbReference>
<dbReference type="Bgee" id="ENSG00000184545">
    <property type="expression patterns" value="Expressed in mucosa of stomach and 97 other cell types or tissues"/>
</dbReference>
<dbReference type="GO" id="GO:0005737">
    <property type="term" value="C:cytoplasm"/>
    <property type="evidence" value="ECO:0000318"/>
    <property type="project" value="GO_Central"/>
</dbReference>
<dbReference type="GO" id="GO:0005634">
    <property type="term" value="C:nucleus"/>
    <property type="evidence" value="ECO:0007669"/>
    <property type="project" value="UniProtKB-SubCell"/>
</dbReference>
<dbReference type="GO" id="GO:0033550">
    <property type="term" value="F:MAP kinase tyrosine phosphatase activity"/>
    <property type="evidence" value="ECO:0000318"/>
    <property type="project" value="GO_Central"/>
</dbReference>
<dbReference type="GO" id="GO:0017017">
    <property type="term" value="F:MAP kinase tyrosine/serine/threonine phosphatase activity"/>
    <property type="evidence" value="ECO:0000318"/>
    <property type="project" value="GO_Central"/>
</dbReference>
<dbReference type="GO" id="GO:0016791">
    <property type="term" value="F:phosphatase activity"/>
    <property type="evidence" value="ECO:0000250"/>
    <property type="project" value="UniProtKB"/>
</dbReference>
<dbReference type="GO" id="GO:0004722">
    <property type="term" value="F:protein serine/threonine phosphatase activity"/>
    <property type="evidence" value="ECO:0007669"/>
    <property type="project" value="UniProtKB-EC"/>
</dbReference>
<dbReference type="GO" id="GO:0008330">
    <property type="term" value="F:protein tyrosine/threonine phosphatase activity"/>
    <property type="evidence" value="ECO:0000318"/>
    <property type="project" value="GO_Central"/>
</dbReference>
<dbReference type="GO" id="GO:0016311">
    <property type="term" value="P:dephosphorylation"/>
    <property type="evidence" value="ECO:0000250"/>
    <property type="project" value="UniProtKB"/>
</dbReference>
<dbReference type="GO" id="GO:0043409">
    <property type="term" value="P:negative regulation of MAPK cascade"/>
    <property type="evidence" value="ECO:0000318"/>
    <property type="project" value="GO_Central"/>
</dbReference>
<dbReference type="GO" id="GO:0007165">
    <property type="term" value="P:signal transduction"/>
    <property type="evidence" value="ECO:0000318"/>
    <property type="project" value="GO_Central"/>
</dbReference>
<dbReference type="CDD" id="cd14645">
    <property type="entry name" value="DSP_DUSP8"/>
    <property type="match status" value="1"/>
</dbReference>
<dbReference type="CDD" id="cd01446">
    <property type="entry name" value="DSP_MapKP"/>
    <property type="match status" value="1"/>
</dbReference>
<dbReference type="FunFam" id="3.40.250.10:FF:000020">
    <property type="entry name" value="Dual specificity protein phosphatase 8"/>
    <property type="match status" value="1"/>
</dbReference>
<dbReference type="FunFam" id="3.90.190.10:FF:000044">
    <property type="entry name" value="Dual specificity protein phosphatase 8"/>
    <property type="match status" value="1"/>
</dbReference>
<dbReference type="Gene3D" id="3.90.190.10">
    <property type="entry name" value="Protein tyrosine phosphatase superfamily"/>
    <property type="match status" value="1"/>
</dbReference>
<dbReference type="Gene3D" id="3.40.250.10">
    <property type="entry name" value="Rhodanese-like domain"/>
    <property type="match status" value="1"/>
</dbReference>
<dbReference type="InterPro" id="IPR000340">
    <property type="entry name" value="Dual-sp_phosphatase_cat-dom"/>
</dbReference>
<dbReference type="InterPro" id="IPR048035">
    <property type="entry name" value="DUSP8_DSP"/>
</dbReference>
<dbReference type="InterPro" id="IPR008343">
    <property type="entry name" value="MKP"/>
</dbReference>
<dbReference type="InterPro" id="IPR029021">
    <property type="entry name" value="Prot-tyrosine_phosphatase-like"/>
</dbReference>
<dbReference type="InterPro" id="IPR001763">
    <property type="entry name" value="Rhodanese-like_dom"/>
</dbReference>
<dbReference type="InterPro" id="IPR036873">
    <property type="entry name" value="Rhodanese-like_dom_sf"/>
</dbReference>
<dbReference type="InterPro" id="IPR016130">
    <property type="entry name" value="Tyr_Pase_AS"/>
</dbReference>
<dbReference type="InterPro" id="IPR000387">
    <property type="entry name" value="Tyr_Pase_dom"/>
</dbReference>
<dbReference type="InterPro" id="IPR020422">
    <property type="entry name" value="TYR_PHOSPHATASE_DUAL_dom"/>
</dbReference>
<dbReference type="PANTHER" id="PTHR10159">
    <property type="entry name" value="DUAL SPECIFICITY PROTEIN PHOSPHATASE"/>
    <property type="match status" value="1"/>
</dbReference>
<dbReference type="PANTHER" id="PTHR10159:SF108">
    <property type="entry name" value="DUAL SPECIFICITY PROTEIN PHOSPHATASE 8"/>
    <property type="match status" value="1"/>
</dbReference>
<dbReference type="Pfam" id="PF00782">
    <property type="entry name" value="DSPc"/>
    <property type="match status" value="1"/>
</dbReference>
<dbReference type="Pfam" id="PF00581">
    <property type="entry name" value="Rhodanese"/>
    <property type="match status" value="1"/>
</dbReference>
<dbReference type="PRINTS" id="PR01764">
    <property type="entry name" value="MAPKPHPHTASE"/>
</dbReference>
<dbReference type="SMART" id="SM00195">
    <property type="entry name" value="DSPc"/>
    <property type="match status" value="1"/>
</dbReference>
<dbReference type="SMART" id="SM00450">
    <property type="entry name" value="RHOD"/>
    <property type="match status" value="1"/>
</dbReference>
<dbReference type="SUPFAM" id="SSF52799">
    <property type="entry name" value="(Phosphotyrosine protein) phosphatases II"/>
    <property type="match status" value="1"/>
</dbReference>
<dbReference type="SUPFAM" id="SSF52821">
    <property type="entry name" value="Rhodanese/Cell cycle control phosphatase"/>
    <property type="match status" value="1"/>
</dbReference>
<dbReference type="PROSITE" id="PS50206">
    <property type="entry name" value="RHODANESE_3"/>
    <property type="match status" value="1"/>
</dbReference>
<dbReference type="PROSITE" id="PS00383">
    <property type="entry name" value="TYR_PHOSPHATASE_1"/>
    <property type="match status" value="1"/>
</dbReference>
<dbReference type="PROSITE" id="PS50056">
    <property type="entry name" value="TYR_PHOSPHATASE_2"/>
    <property type="match status" value="1"/>
</dbReference>
<dbReference type="PROSITE" id="PS50054">
    <property type="entry name" value="TYR_PHOSPHATASE_DUAL"/>
    <property type="match status" value="1"/>
</dbReference>
<proteinExistence type="evidence at protein level"/>
<comment type="function">
    <text evidence="1">Has phosphatase activity with synthetic phosphatase substrates and negatively regulates mitogen-activated protein kinase activity, presumably by catalysing their dephosphorylation. Expected to display protein phosphatase activity toward phosphotyrosine, phosphoserine and phosphothreonine residues.</text>
</comment>
<comment type="catalytic activity">
    <reaction evidence="4">
        <text>O-phospho-L-tyrosyl-[protein] + H2O = L-tyrosyl-[protein] + phosphate</text>
        <dbReference type="Rhea" id="RHEA:10684"/>
        <dbReference type="Rhea" id="RHEA-COMP:10136"/>
        <dbReference type="Rhea" id="RHEA-COMP:20101"/>
        <dbReference type="ChEBI" id="CHEBI:15377"/>
        <dbReference type="ChEBI" id="CHEBI:43474"/>
        <dbReference type="ChEBI" id="CHEBI:46858"/>
        <dbReference type="ChEBI" id="CHEBI:61978"/>
        <dbReference type="EC" id="3.1.3.48"/>
    </reaction>
</comment>
<comment type="catalytic activity">
    <reaction>
        <text>O-phospho-L-seryl-[protein] + H2O = L-seryl-[protein] + phosphate</text>
        <dbReference type="Rhea" id="RHEA:20629"/>
        <dbReference type="Rhea" id="RHEA-COMP:9863"/>
        <dbReference type="Rhea" id="RHEA-COMP:11604"/>
        <dbReference type="ChEBI" id="CHEBI:15377"/>
        <dbReference type="ChEBI" id="CHEBI:29999"/>
        <dbReference type="ChEBI" id="CHEBI:43474"/>
        <dbReference type="ChEBI" id="CHEBI:83421"/>
        <dbReference type="EC" id="3.1.3.16"/>
    </reaction>
</comment>
<comment type="catalytic activity">
    <reaction>
        <text>O-phospho-L-threonyl-[protein] + H2O = L-threonyl-[protein] + phosphate</text>
        <dbReference type="Rhea" id="RHEA:47004"/>
        <dbReference type="Rhea" id="RHEA-COMP:11060"/>
        <dbReference type="Rhea" id="RHEA-COMP:11605"/>
        <dbReference type="ChEBI" id="CHEBI:15377"/>
        <dbReference type="ChEBI" id="CHEBI:30013"/>
        <dbReference type="ChEBI" id="CHEBI:43474"/>
        <dbReference type="ChEBI" id="CHEBI:61977"/>
        <dbReference type="EC" id="3.1.3.16"/>
    </reaction>
</comment>
<comment type="subunit">
    <text evidence="6">Monomer.</text>
</comment>
<comment type="interaction">
    <interactant intactId="EBI-6380262">
        <id>Q13202</id>
    </interactant>
    <interactant intactId="EBI-286483">
        <id>P45983</id>
        <label>MAPK8</label>
    </interactant>
    <organismsDiffer>false</organismsDiffer>
    <experiments>3</experiments>
</comment>
<comment type="subcellular location">
    <subcellularLocation>
        <location evidence="1">Cytoplasm</location>
    </subcellularLocation>
    <subcellularLocation>
        <location evidence="1">Nucleus</location>
    </subcellularLocation>
</comment>
<comment type="tissue specificity">
    <text evidence="7">Abundant in brain, heart and skeletal muscle.</text>
</comment>
<comment type="similarity">
    <text evidence="8">Belongs to the protein-tyrosine phosphatase family. Non-receptor class dual specificity subfamily.</text>
</comment>
<name>DUS8_HUMAN</name>
<reference key="1">
    <citation type="journal article" date="1995" name="J. Neurochem.">
        <title>hVH-5: a protein tyrosine phosphatase abundant in brain that inactivates mitogen-activated protein kinase.</title>
        <authorList>
            <person name="Martell K.J."/>
            <person name="Seasholtz A.F."/>
            <person name="Kwak S.P."/>
            <person name="Clemens K.K."/>
            <person name="Dixon J.E."/>
        </authorList>
    </citation>
    <scope>NUCLEOTIDE SEQUENCE [MRNA]</scope>
    <scope>TISSUE SPECIFICITY</scope>
    <source>
        <tissue>Fetal brain</tissue>
    </source>
</reference>
<reference key="2">
    <citation type="journal article" date="2006" name="Nature">
        <title>Human chromosome 11 DNA sequence and analysis including novel gene identification.</title>
        <authorList>
            <person name="Taylor T.D."/>
            <person name="Noguchi H."/>
            <person name="Totoki Y."/>
            <person name="Toyoda A."/>
            <person name="Kuroki Y."/>
            <person name="Dewar K."/>
            <person name="Lloyd C."/>
            <person name="Itoh T."/>
            <person name="Takeda T."/>
            <person name="Kim D.-W."/>
            <person name="She X."/>
            <person name="Barlow K.F."/>
            <person name="Bloom T."/>
            <person name="Bruford E."/>
            <person name="Chang J.L."/>
            <person name="Cuomo C.A."/>
            <person name="Eichler E."/>
            <person name="FitzGerald M.G."/>
            <person name="Jaffe D.B."/>
            <person name="LaButti K."/>
            <person name="Nicol R."/>
            <person name="Park H.-S."/>
            <person name="Seaman C."/>
            <person name="Sougnez C."/>
            <person name="Yang X."/>
            <person name="Zimmer A.R."/>
            <person name="Zody M.C."/>
            <person name="Birren B.W."/>
            <person name="Nusbaum C."/>
            <person name="Fujiyama A."/>
            <person name="Hattori M."/>
            <person name="Rogers J."/>
            <person name="Lander E.S."/>
            <person name="Sakaki Y."/>
        </authorList>
    </citation>
    <scope>NUCLEOTIDE SEQUENCE [LARGE SCALE GENOMIC DNA]</scope>
</reference>
<reference key="3">
    <citation type="journal article" date="2004" name="Genome Res.">
        <title>The status, quality, and expansion of the NIH full-length cDNA project: the Mammalian Gene Collection (MGC).</title>
        <authorList>
            <consortium name="The MGC Project Team"/>
        </authorList>
    </citation>
    <scope>NUCLEOTIDE SEQUENCE [LARGE SCALE MRNA]</scope>
    <source>
        <tissue>Brain</tissue>
        <tissue>Skin</tissue>
    </source>
</reference>
<reference evidence="9" key="4">
    <citation type="journal article" date="2014" name="Acta Crystallogr. D">
        <title>The family-wide structure and function of human dual-specificity protein phosphatases.</title>
        <authorList>
            <person name="Jeong D.G."/>
            <person name="Wei C.H."/>
            <person name="Ku B."/>
            <person name="Jeon T.J."/>
            <person name="Chien P.N."/>
            <person name="Kim J.K."/>
            <person name="Park S.Y."/>
            <person name="Hwang H.S."/>
            <person name="Ryu S.Y."/>
            <person name="Park H."/>
            <person name="Kim D.S."/>
            <person name="Kim S.J."/>
            <person name="Ryu S.E."/>
        </authorList>
    </citation>
    <scope>X-RAY CRYSTALLOGRAPHY (1.90 ANGSTROMS) OF 160-310</scope>
    <scope>SUBUNIT</scope>
</reference>
<keyword id="KW-0002">3D-structure</keyword>
<keyword id="KW-0963">Cytoplasm</keyword>
<keyword id="KW-0378">Hydrolase</keyword>
<keyword id="KW-0539">Nucleus</keyword>
<keyword id="KW-0904">Protein phosphatase</keyword>
<keyword id="KW-1267">Proteomics identification</keyword>
<keyword id="KW-1185">Reference proteome</keyword>
<feature type="chain" id="PRO_0000094810" description="Dual specificity protein phosphatase 8">
    <location>
        <begin position="1"/>
        <end position="625"/>
    </location>
</feature>
<feature type="domain" description="Rhodanese" evidence="3">
    <location>
        <begin position="23"/>
        <end position="138"/>
    </location>
</feature>
<feature type="domain" description="Tyrosine-protein phosphatase" evidence="2">
    <location>
        <begin position="160"/>
        <end position="302"/>
    </location>
</feature>
<feature type="region of interest" description="Disordered" evidence="5">
    <location>
        <begin position="306"/>
        <end position="586"/>
    </location>
</feature>
<feature type="compositionally biased region" description="Basic and acidic residues" evidence="5">
    <location>
        <begin position="380"/>
        <end position="389"/>
    </location>
</feature>
<feature type="compositionally biased region" description="Low complexity" evidence="5">
    <location>
        <begin position="431"/>
        <end position="448"/>
    </location>
</feature>
<feature type="compositionally biased region" description="Basic and acidic residues" evidence="5">
    <location>
        <begin position="555"/>
        <end position="570"/>
    </location>
</feature>
<feature type="active site" description="Phosphocysteine intermediate" evidence="2">
    <location>
        <position position="246"/>
    </location>
</feature>
<feature type="sequence conflict" description="In Ref. 1; AAA83151." evidence="8" ref="1">
    <original>S</original>
    <variation>T</variation>
    <location>
        <position position="299"/>
    </location>
</feature>
<feature type="strand" evidence="10">
    <location>
        <begin position="162"/>
        <end position="165"/>
    </location>
</feature>
<feature type="strand" evidence="10">
    <location>
        <begin position="168"/>
        <end position="171"/>
    </location>
</feature>
<feature type="helix" evidence="10">
    <location>
        <begin position="173"/>
        <end position="176"/>
    </location>
</feature>
<feature type="helix" evidence="10">
    <location>
        <begin position="179"/>
        <end position="184"/>
    </location>
</feature>
<feature type="strand" evidence="10">
    <location>
        <begin position="187"/>
        <end position="192"/>
    </location>
</feature>
<feature type="strand" evidence="10">
    <location>
        <begin position="195"/>
        <end position="197"/>
    </location>
</feature>
<feature type="helix" evidence="10">
    <location>
        <begin position="205"/>
        <end position="207"/>
    </location>
</feature>
<feature type="strand" evidence="10">
    <location>
        <begin position="208"/>
        <end position="210"/>
    </location>
</feature>
<feature type="strand" evidence="10">
    <location>
        <begin position="215"/>
        <end position="218"/>
    </location>
</feature>
<feature type="helix" evidence="10">
    <location>
        <begin position="222"/>
        <end position="224"/>
    </location>
</feature>
<feature type="helix" evidence="10">
    <location>
        <begin position="225"/>
        <end position="237"/>
    </location>
</feature>
<feature type="strand" evidence="10">
    <location>
        <begin position="241"/>
        <end position="245"/>
    </location>
</feature>
<feature type="strand" evidence="10">
    <location>
        <begin position="247"/>
        <end position="251"/>
    </location>
</feature>
<feature type="helix" evidence="10">
    <location>
        <begin position="252"/>
        <end position="265"/>
    </location>
</feature>
<feature type="helix" evidence="10">
    <location>
        <begin position="269"/>
        <end position="279"/>
    </location>
</feature>
<feature type="helix" evidence="10">
    <location>
        <begin position="287"/>
        <end position="306"/>
    </location>
</feature>
<gene>
    <name type="primary">DUSP8</name>
    <name type="synonym">C11orf81</name>
    <name type="synonym">VH5</name>
</gene>